<name>Y2426_SACD2</name>
<protein>
    <recommendedName>
        <fullName evidence="1">UPF0502 protein Sde_2426</fullName>
    </recommendedName>
</protein>
<reference key="1">
    <citation type="journal article" date="2008" name="PLoS Genet.">
        <title>Complete genome sequence of the complex carbohydrate-degrading marine bacterium, Saccharophagus degradans strain 2-40 T.</title>
        <authorList>
            <person name="Weiner R.M."/>
            <person name="Taylor L.E. II"/>
            <person name="Henrissat B."/>
            <person name="Hauser L."/>
            <person name="Land M."/>
            <person name="Coutinho P.M."/>
            <person name="Rancurel C."/>
            <person name="Saunders E.H."/>
            <person name="Longmire A.G."/>
            <person name="Zhang H."/>
            <person name="Bayer E.A."/>
            <person name="Gilbert H.J."/>
            <person name="Larimer F."/>
            <person name="Zhulin I.B."/>
            <person name="Ekborg N.A."/>
            <person name="Lamed R."/>
            <person name="Richardson P.M."/>
            <person name="Borovok I."/>
            <person name="Hutcheson S."/>
        </authorList>
    </citation>
    <scope>NUCLEOTIDE SEQUENCE [LARGE SCALE GENOMIC DNA]</scope>
    <source>
        <strain>2-40 / ATCC 43961 / DSM 17024</strain>
    </source>
</reference>
<sequence length="223" mass="24916">MKLSLNETRVIGVLIEKEVTTPDQYPMSLNALTNACNQKTNREPVLNLSETEVQESLDALAKQGLVVESRVGNRIPKYKHRFCNSEFGELQFTKQELAIVCTLFLRGAQTPGELRTRTNRLCTFADVQETEKVLQGLIDHSRGSYVVKLEREPGKRESRYAHLFSGDAATTVAQIPATTNTSTPAQSNSPQNNAELLERVEMLELTVEELQNQINKLVEQLGG</sequence>
<gene>
    <name type="ordered locus">Sde_2426</name>
</gene>
<accession>Q21HZ3</accession>
<dbReference type="EMBL" id="CP000282">
    <property type="protein sequence ID" value="ABD81686.1"/>
    <property type="molecule type" value="Genomic_DNA"/>
</dbReference>
<dbReference type="RefSeq" id="WP_011468903.1">
    <property type="nucleotide sequence ID" value="NC_007912.1"/>
</dbReference>
<dbReference type="SMR" id="Q21HZ3"/>
<dbReference type="STRING" id="203122.Sde_2426"/>
<dbReference type="GeneID" id="98614087"/>
<dbReference type="KEGG" id="sde:Sde_2426"/>
<dbReference type="eggNOG" id="COG3132">
    <property type="taxonomic scope" value="Bacteria"/>
</dbReference>
<dbReference type="HOGENOM" id="CLU_057831_2_0_6"/>
<dbReference type="OrthoDB" id="9784785at2"/>
<dbReference type="Proteomes" id="UP000001947">
    <property type="component" value="Chromosome"/>
</dbReference>
<dbReference type="Gene3D" id="1.10.10.10">
    <property type="entry name" value="Winged helix-like DNA-binding domain superfamily/Winged helix DNA-binding domain"/>
    <property type="match status" value="2"/>
</dbReference>
<dbReference type="HAMAP" id="MF_01584">
    <property type="entry name" value="UPF0502"/>
    <property type="match status" value="1"/>
</dbReference>
<dbReference type="InterPro" id="IPR007432">
    <property type="entry name" value="DUF480"/>
</dbReference>
<dbReference type="InterPro" id="IPR036388">
    <property type="entry name" value="WH-like_DNA-bd_sf"/>
</dbReference>
<dbReference type="InterPro" id="IPR036390">
    <property type="entry name" value="WH_DNA-bd_sf"/>
</dbReference>
<dbReference type="PANTHER" id="PTHR38768">
    <property type="entry name" value="UPF0502 PROTEIN YCEH"/>
    <property type="match status" value="1"/>
</dbReference>
<dbReference type="PANTHER" id="PTHR38768:SF1">
    <property type="entry name" value="UPF0502 PROTEIN YCEH"/>
    <property type="match status" value="1"/>
</dbReference>
<dbReference type="Pfam" id="PF04337">
    <property type="entry name" value="DUF480"/>
    <property type="match status" value="1"/>
</dbReference>
<dbReference type="SUPFAM" id="SSF46785">
    <property type="entry name" value="Winged helix' DNA-binding domain"/>
    <property type="match status" value="2"/>
</dbReference>
<evidence type="ECO:0000255" key="1">
    <source>
        <dbReference type="HAMAP-Rule" id="MF_01584"/>
    </source>
</evidence>
<organism>
    <name type="scientific">Saccharophagus degradans (strain 2-40 / ATCC 43961 / DSM 17024)</name>
    <dbReference type="NCBI Taxonomy" id="203122"/>
    <lineage>
        <taxon>Bacteria</taxon>
        <taxon>Pseudomonadati</taxon>
        <taxon>Pseudomonadota</taxon>
        <taxon>Gammaproteobacteria</taxon>
        <taxon>Cellvibrionales</taxon>
        <taxon>Cellvibrionaceae</taxon>
        <taxon>Saccharophagus</taxon>
    </lineage>
</organism>
<proteinExistence type="inferred from homology"/>
<keyword id="KW-1185">Reference proteome</keyword>
<feature type="chain" id="PRO_0000309418" description="UPF0502 protein Sde_2426">
    <location>
        <begin position="1"/>
        <end position="223"/>
    </location>
</feature>
<comment type="similarity">
    <text evidence="1">Belongs to the UPF0502 family.</text>
</comment>